<organism>
    <name type="scientific">Acinetobacter baumannii (strain ATCC 17978 / DSM 105126 / CIP 53.77 / LMG 1025 / NCDC KC755 / 5377)</name>
    <dbReference type="NCBI Taxonomy" id="400667"/>
    <lineage>
        <taxon>Bacteria</taxon>
        <taxon>Pseudomonadati</taxon>
        <taxon>Pseudomonadota</taxon>
        <taxon>Gammaproteobacteria</taxon>
        <taxon>Moraxellales</taxon>
        <taxon>Moraxellaceae</taxon>
        <taxon>Acinetobacter</taxon>
        <taxon>Acinetobacter calcoaceticus/baumannii complex</taxon>
    </lineage>
</organism>
<gene>
    <name evidence="1" type="primary">hisF</name>
    <name type="ordered locus">A1S_3245</name>
</gene>
<protein>
    <recommendedName>
        <fullName evidence="1">Imidazole glycerol phosphate synthase subunit HisF</fullName>
        <ecNumber evidence="1">4.3.2.10</ecNumber>
    </recommendedName>
    <alternativeName>
        <fullName evidence="1">IGP synthase cyclase subunit</fullName>
    </alternativeName>
    <alternativeName>
        <fullName evidence="1">IGP synthase subunit HisF</fullName>
    </alternativeName>
    <alternativeName>
        <fullName evidence="1">ImGP synthase subunit HisF</fullName>
        <shortName evidence="1">IGPS subunit HisF</shortName>
    </alternativeName>
</protein>
<reference key="1">
    <citation type="journal article" date="2007" name="Genes Dev.">
        <title>New insights into Acinetobacter baumannii pathogenesis revealed by high-density pyrosequencing and transposon mutagenesis.</title>
        <authorList>
            <person name="Smith M.G."/>
            <person name="Gianoulis T.A."/>
            <person name="Pukatzki S."/>
            <person name="Mekalanos J.J."/>
            <person name="Ornston L.N."/>
            <person name="Gerstein M."/>
            <person name="Snyder M."/>
        </authorList>
    </citation>
    <scope>NUCLEOTIDE SEQUENCE [LARGE SCALE GENOMIC DNA]</scope>
    <source>
        <strain>ATCC 17978 / DSM 105126 / CIP 53.77 / LMG 1025 / NCDC KC755 / 5377</strain>
    </source>
</reference>
<feature type="chain" id="PRO_1000134955" description="Imidazole glycerol phosphate synthase subunit HisF">
    <location>
        <begin position="1"/>
        <end position="252"/>
    </location>
</feature>
<feature type="active site" evidence="1">
    <location>
        <position position="11"/>
    </location>
</feature>
<feature type="active site" evidence="1">
    <location>
        <position position="130"/>
    </location>
</feature>
<sequence>MLAKRIIPCLDVDNGRVVKGVQFLDIRDAGDPVEVARRYNEQGADEITFLDITATHHGRDTTYRTVERMAETVFVPLTVGGGVRKVEDIRALLNAGADKVSINSAAVFNPEFVQEASQHFGAQCIVVAIDAKKTGDNKWEIFTHGGRKPTGIDAIEWAVKMADYGAGELLITSMDADGTKAGYDIALMRAINDRVTIPTIASGGVGNLQHLADGILQGGADAVLAASIFHFGQYTIPEAKQYLAEQGIEMRL</sequence>
<proteinExistence type="inferred from homology"/>
<keyword id="KW-0028">Amino-acid biosynthesis</keyword>
<keyword id="KW-0963">Cytoplasm</keyword>
<keyword id="KW-0368">Histidine biosynthesis</keyword>
<keyword id="KW-0456">Lyase</keyword>
<accession>A3M9P1</accession>
<name>HIS6_ACIBT</name>
<evidence type="ECO:0000255" key="1">
    <source>
        <dbReference type="HAMAP-Rule" id="MF_01013"/>
    </source>
</evidence>
<dbReference type="EC" id="4.3.2.10" evidence="1"/>
<dbReference type="EMBL" id="CP000521">
    <property type="protein sequence ID" value="ABO13635.2"/>
    <property type="molecule type" value="Genomic_DNA"/>
</dbReference>
<dbReference type="RefSeq" id="WP_000880078.1">
    <property type="nucleotide sequence ID" value="NZ_CP053098.1"/>
</dbReference>
<dbReference type="SMR" id="A3M9P1"/>
<dbReference type="GeneID" id="92895482"/>
<dbReference type="KEGG" id="acb:A1S_3245"/>
<dbReference type="HOGENOM" id="CLU_048577_4_0_6"/>
<dbReference type="UniPathway" id="UPA00031">
    <property type="reaction ID" value="UER00010"/>
</dbReference>
<dbReference type="PHI-base" id="PHI:10701"/>
<dbReference type="GO" id="GO:0005737">
    <property type="term" value="C:cytoplasm"/>
    <property type="evidence" value="ECO:0007669"/>
    <property type="project" value="UniProtKB-SubCell"/>
</dbReference>
<dbReference type="GO" id="GO:0000107">
    <property type="term" value="F:imidazoleglycerol-phosphate synthase activity"/>
    <property type="evidence" value="ECO:0007669"/>
    <property type="project" value="UniProtKB-UniRule"/>
</dbReference>
<dbReference type="GO" id="GO:0016829">
    <property type="term" value="F:lyase activity"/>
    <property type="evidence" value="ECO:0007669"/>
    <property type="project" value="UniProtKB-KW"/>
</dbReference>
<dbReference type="GO" id="GO:0000105">
    <property type="term" value="P:L-histidine biosynthetic process"/>
    <property type="evidence" value="ECO:0007669"/>
    <property type="project" value="UniProtKB-UniRule"/>
</dbReference>
<dbReference type="CDD" id="cd04731">
    <property type="entry name" value="HisF"/>
    <property type="match status" value="1"/>
</dbReference>
<dbReference type="FunFam" id="3.20.20.70:FF:000006">
    <property type="entry name" value="Imidazole glycerol phosphate synthase subunit HisF"/>
    <property type="match status" value="1"/>
</dbReference>
<dbReference type="Gene3D" id="3.20.20.70">
    <property type="entry name" value="Aldolase class I"/>
    <property type="match status" value="1"/>
</dbReference>
<dbReference type="HAMAP" id="MF_01013">
    <property type="entry name" value="HisF"/>
    <property type="match status" value="1"/>
</dbReference>
<dbReference type="InterPro" id="IPR013785">
    <property type="entry name" value="Aldolase_TIM"/>
</dbReference>
<dbReference type="InterPro" id="IPR006062">
    <property type="entry name" value="His_biosynth"/>
</dbReference>
<dbReference type="InterPro" id="IPR004651">
    <property type="entry name" value="HisF"/>
</dbReference>
<dbReference type="InterPro" id="IPR050064">
    <property type="entry name" value="IGPS_HisA/HisF"/>
</dbReference>
<dbReference type="InterPro" id="IPR011060">
    <property type="entry name" value="RibuloseP-bd_barrel"/>
</dbReference>
<dbReference type="NCBIfam" id="TIGR00735">
    <property type="entry name" value="hisF"/>
    <property type="match status" value="1"/>
</dbReference>
<dbReference type="PANTHER" id="PTHR21235:SF2">
    <property type="entry name" value="IMIDAZOLE GLYCEROL PHOSPHATE SYNTHASE HISHF"/>
    <property type="match status" value="1"/>
</dbReference>
<dbReference type="PANTHER" id="PTHR21235">
    <property type="entry name" value="IMIDAZOLE GLYCEROL PHOSPHATE SYNTHASE SUBUNIT HISF/H IGP SYNTHASE SUBUNIT HISF/H"/>
    <property type="match status" value="1"/>
</dbReference>
<dbReference type="Pfam" id="PF00977">
    <property type="entry name" value="His_biosynth"/>
    <property type="match status" value="1"/>
</dbReference>
<dbReference type="SUPFAM" id="SSF51366">
    <property type="entry name" value="Ribulose-phoshate binding barrel"/>
    <property type="match status" value="1"/>
</dbReference>
<comment type="function">
    <text evidence="1">IGPS catalyzes the conversion of PRFAR and glutamine to IGP, AICAR and glutamate. The HisF subunit catalyzes the cyclization activity that produces IGP and AICAR from PRFAR using the ammonia provided by the HisH subunit.</text>
</comment>
<comment type="catalytic activity">
    <reaction evidence="1">
        <text>5-[(5-phospho-1-deoxy-D-ribulos-1-ylimino)methylamino]-1-(5-phospho-beta-D-ribosyl)imidazole-4-carboxamide + L-glutamine = D-erythro-1-(imidazol-4-yl)glycerol 3-phosphate + 5-amino-1-(5-phospho-beta-D-ribosyl)imidazole-4-carboxamide + L-glutamate + H(+)</text>
        <dbReference type="Rhea" id="RHEA:24793"/>
        <dbReference type="ChEBI" id="CHEBI:15378"/>
        <dbReference type="ChEBI" id="CHEBI:29985"/>
        <dbReference type="ChEBI" id="CHEBI:58278"/>
        <dbReference type="ChEBI" id="CHEBI:58359"/>
        <dbReference type="ChEBI" id="CHEBI:58475"/>
        <dbReference type="ChEBI" id="CHEBI:58525"/>
        <dbReference type="EC" id="4.3.2.10"/>
    </reaction>
</comment>
<comment type="pathway">
    <text evidence="1">Amino-acid biosynthesis; L-histidine biosynthesis; L-histidine from 5-phospho-alpha-D-ribose 1-diphosphate: step 5/9.</text>
</comment>
<comment type="subunit">
    <text evidence="1">Heterodimer of HisH and HisF.</text>
</comment>
<comment type="subcellular location">
    <subcellularLocation>
        <location evidence="1">Cytoplasm</location>
    </subcellularLocation>
</comment>
<comment type="similarity">
    <text evidence="1">Belongs to the HisA/HisF family.</text>
</comment>